<keyword id="KW-0002">3D-structure</keyword>
<keyword id="KW-0963">Cytoplasm</keyword>
<keyword id="KW-0539">Nucleus</keyword>
<keyword id="KW-1185">Reference proteome</keyword>
<reference key="1">
    <citation type="journal article" date="1998" name="Plant Cell">
        <title>14-3-3 proteins are part of an abscisic acid-VIVIPAROUS1 (VP1) response complex in the Em promoter and interact with VP1 and EmBP1.</title>
        <authorList>
            <person name="Schultz T.F."/>
            <person name="Medina J."/>
            <person name="Hill A."/>
            <person name="Quatrano R.S."/>
        </authorList>
    </citation>
    <scope>NUCLEOTIDE SEQUENCE [MRNA]</scope>
    <scope>SUBUNIT</scope>
    <scope>SUBCELLULAR LOCATION</scope>
    <source>
        <strain>cv. Nipponbare</strain>
        <tissue>Embryo</tissue>
    </source>
</reference>
<reference key="2">
    <citation type="journal article" date="2005" name="Nature">
        <title>The map-based sequence of the rice genome.</title>
        <authorList>
            <consortium name="International rice genome sequencing project (IRGSP)"/>
        </authorList>
    </citation>
    <scope>NUCLEOTIDE SEQUENCE [LARGE SCALE GENOMIC DNA]</scope>
    <source>
        <strain>cv. Nipponbare</strain>
    </source>
</reference>
<reference key="3">
    <citation type="journal article" date="2013" name="Rice">
        <title>Improvement of the Oryza sativa Nipponbare reference genome using next generation sequence and optical map data.</title>
        <authorList>
            <person name="Kawahara Y."/>
            <person name="de la Bastide M."/>
            <person name="Hamilton J.P."/>
            <person name="Kanamori H."/>
            <person name="McCombie W.R."/>
            <person name="Ouyang S."/>
            <person name="Schwartz D.C."/>
            <person name="Tanaka T."/>
            <person name="Wu J."/>
            <person name="Zhou S."/>
            <person name="Childs K.L."/>
            <person name="Davidson R.M."/>
            <person name="Lin H."/>
            <person name="Quesada-Ocampo L."/>
            <person name="Vaillancourt B."/>
            <person name="Sakai H."/>
            <person name="Lee S.S."/>
            <person name="Kim J."/>
            <person name="Numa H."/>
            <person name="Itoh T."/>
            <person name="Buell C.R."/>
            <person name="Matsumoto T."/>
        </authorList>
    </citation>
    <scope>GENOME REANNOTATION</scope>
    <source>
        <strain>cv. Nipponbare</strain>
    </source>
</reference>
<reference key="4">
    <citation type="submission" date="2001-11" db="EMBL/GenBank/DDBJ databases">
        <title>Expression and regulation of genes involved in carbohydrate metabolism in rice.</title>
        <authorList>
            <person name="Lee D.-S."/>
            <person name="Hur Y."/>
        </authorList>
    </citation>
    <scope>NUCLEOTIDE SEQUENCE [MRNA] OF 83-169</scope>
    <source>
        <strain>cv. Stejaree45</strain>
    </source>
</reference>
<reference key="5">
    <citation type="journal article" date="2006" name="DNA Res.">
        <title>The rice 14-3-3 gene family and its involvement in responses to biotic and abiotic stress.</title>
        <authorList>
            <person name="Chen F."/>
            <person name="Li Q."/>
            <person name="Sun L."/>
            <person name="He Z."/>
        </authorList>
    </citation>
    <scope>SUBCELLULAR LOCATION</scope>
    <scope>TISSUE SPECIFICITY</scope>
    <scope>INDUCTION</scope>
    <scope>NOMENCLATURE</scope>
</reference>
<dbReference type="EMBL" id="U65957">
    <property type="protein sequence ID" value="AAB07457.1"/>
    <property type="molecule type" value="mRNA"/>
</dbReference>
<dbReference type="EMBL" id="AP003881">
    <property type="protein sequence ID" value="BAD01170.1"/>
    <property type="molecule type" value="Genomic_DNA"/>
</dbReference>
<dbReference type="EMBL" id="AP014964">
    <property type="protein sequence ID" value="BAT05544.1"/>
    <property type="molecule type" value="Genomic_DNA"/>
</dbReference>
<dbReference type="EMBL" id="AF451190">
    <property type="protein sequence ID" value="AAL47850.1"/>
    <property type="molecule type" value="mRNA"/>
</dbReference>
<dbReference type="PIR" id="T04153">
    <property type="entry name" value="T04153"/>
</dbReference>
<dbReference type="RefSeq" id="XP_015650299.1">
    <property type="nucleotide sequence ID" value="XM_015794813.1"/>
</dbReference>
<dbReference type="PDB" id="3AXY">
    <property type="method" value="X-ray"/>
    <property type="resolution" value="2.40 A"/>
    <property type="chains" value="C/D/I/J=1-235"/>
</dbReference>
<dbReference type="PDBsum" id="3AXY"/>
<dbReference type="SMR" id="Q6ZKC0"/>
<dbReference type="BioGRID" id="814671">
    <property type="interactions" value="1"/>
</dbReference>
<dbReference type="DIP" id="DIP-46487N"/>
<dbReference type="FunCoup" id="Q6ZKC0">
    <property type="interactions" value="2626"/>
</dbReference>
<dbReference type="IntAct" id="Q6ZKC0">
    <property type="interactions" value="15"/>
</dbReference>
<dbReference type="STRING" id="39947.Q6ZKC0"/>
<dbReference type="PaxDb" id="39947-Q6ZKC0"/>
<dbReference type="EnsemblPlants" id="Os08t0430500-01">
    <property type="protein sequence ID" value="Os08t0430500-01"/>
    <property type="gene ID" value="Os08g0430500"/>
</dbReference>
<dbReference type="EnsemblPlants" id="Os08t0430500-02">
    <property type="protein sequence ID" value="Os08t0430500-02"/>
    <property type="gene ID" value="Os08g0430500"/>
</dbReference>
<dbReference type="Gramene" id="Os08t0430500-01">
    <property type="protein sequence ID" value="Os08t0430500-01"/>
    <property type="gene ID" value="Os08g0430500"/>
</dbReference>
<dbReference type="Gramene" id="Os08t0430500-02">
    <property type="protein sequence ID" value="Os08t0430500-02"/>
    <property type="gene ID" value="Os08g0430500"/>
</dbReference>
<dbReference type="eggNOG" id="KOG0841">
    <property type="taxonomic scope" value="Eukaryota"/>
</dbReference>
<dbReference type="HOGENOM" id="CLU_058290_0_1_1"/>
<dbReference type="InParanoid" id="Q6ZKC0"/>
<dbReference type="OMA" id="KIIWEYR"/>
<dbReference type="OrthoDB" id="10260625at2759"/>
<dbReference type="PlantReactome" id="R-OSA-5632095">
    <property type="pathway name" value="Brassinosteroid signaling"/>
</dbReference>
<dbReference type="PlantReactome" id="R-OSA-9609102">
    <property type="pathway name" value="Flower development"/>
</dbReference>
<dbReference type="EvolutionaryTrace" id="Q6ZKC0"/>
<dbReference type="Proteomes" id="UP000000763">
    <property type="component" value="Chromosome 8"/>
</dbReference>
<dbReference type="Proteomes" id="UP000059680">
    <property type="component" value="Chromosome 8"/>
</dbReference>
<dbReference type="ExpressionAtlas" id="Q6ZKC0">
    <property type="expression patterns" value="baseline and differential"/>
</dbReference>
<dbReference type="GO" id="GO:0005737">
    <property type="term" value="C:cytoplasm"/>
    <property type="evidence" value="ECO:0000318"/>
    <property type="project" value="GO_Central"/>
</dbReference>
<dbReference type="GO" id="GO:0005634">
    <property type="term" value="C:nucleus"/>
    <property type="evidence" value="ECO:0007669"/>
    <property type="project" value="UniProtKB-SubCell"/>
</dbReference>
<dbReference type="GO" id="GO:0008104">
    <property type="term" value="P:protein localization"/>
    <property type="evidence" value="ECO:0000318"/>
    <property type="project" value="GO_Central"/>
</dbReference>
<dbReference type="GO" id="GO:0007165">
    <property type="term" value="P:signal transduction"/>
    <property type="evidence" value="ECO:0000318"/>
    <property type="project" value="GO_Central"/>
</dbReference>
<dbReference type="FunFam" id="1.20.190.20:FF:000002">
    <property type="entry name" value="14-3-3 protein epsilon"/>
    <property type="match status" value="1"/>
</dbReference>
<dbReference type="Gene3D" id="1.20.190.20">
    <property type="entry name" value="14-3-3 domain"/>
    <property type="match status" value="1"/>
</dbReference>
<dbReference type="InterPro" id="IPR000308">
    <property type="entry name" value="14-3-3"/>
</dbReference>
<dbReference type="InterPro" id="IPR023409">
    <property type="entry name" value="14-3-3_CS"/>
</dbReference>
<dbReference type="InterPro" id="IPR036815">
    <property type="entry name" value="14-3-3_dom_sf"/>
</dbReference>
<dbReference type="InterPro" id="IPR023410">
    <property type="entry name" value="14-3-3_domain"/>
</dbReference>
<dbReference type="PANTHER" id="PTHR18860">
    <property type="entry name" value="14-3-3 PROTEIN"/>
    <property type="match status" value="1"/>
</dbReference>
<dbReference type="Pfam" id="PF00244">
    <property type="entry name" value="14-3-3"/>
    <property type="match status" value="1"/>
</dbReference>
<dbReference type="PIRSF" id="PIRSF000868">
    <property type="entry name" value="14-3-3"/>
    <property type="match status" value="1"/>
</dbReference>
<dbReference type="PRINTS" id="PR00305">
    <property type="entry name" value="1433ZETA"/>
</dbReference>
<dbReference type="SMART" id="SM00101">
    <property type="entry name" value="14_3_3"/>
    <property type="match status" value="1"/>
</dbReference>
<dbReference type="SUPFAM" id="SSF48445">
    <property type="entry name" value="14-3-3 protein"/>
    <property type="match status" value="1"/>
</dbReference>
<dbReference type="PROSITE" id="PS00796">
    <property type="entry name" value="1433_1"/>
    <property type="match status" value="1"/>
</dbReference>
<dbReference type="PROSITE" id="PS00797">
    <property type="entry name" value="1433_2"/>
    <property type="match status" value="1"/>
</dbReference>
<name>14333_ORYSJ</name>
<comment type="function">
    <text>Is associated with a DNA binding complex that binds to the G box, a well-characterized cis-acting DNA regulatory element found in plant genes.</text>
</comment>
<comment type="subunit">
    <text evidence="2">May form a complex with the transcriptional activator VP1 and the bZIP transcription factor EMBP1.</text>
</comment>
<comment type="interaction">
    <interactant intactId="EBI-628537">
        <id>Q6ZKC0</id>
    </interactant>
    <interactant intactId="EBI-15652208">
        <id>Q7XI96</id>
        <label>BZR1</label>
    </interactant>
    <organismsDiffer>false</organismsDiffer>
    <experiments>3</experiments>
</comment>
<comment type="subcellular location">
    <subcellularLocation>
        <location>Cytoplasm</location>
    </subcellularLocation>
    <subcellularLocation>
        <location>Nucleus</location>
    </subcellularLocation>
</comment>
<comment type="tissue specificity">
    <text evidence="1">Expressed in seedlings, internodes and panicles.</text>
</comment>
<comment type="induction">
    <text evidence="1">By wounding, drought and salt stresses, benzothiadiazole (BTH), ethephon, methyl jasmonate (MeJa), hydrogen peroxide, abscisic acid (ABA) and incompatible and compatible races of rice blast fungus (M.grisea) and rice bacterial blight (X.oryzae).</text>
</comment>
<comment type="similarity">
    <text evidence="3">Belongs to the 14-3-3 family.</text>
</comment>
<proteinExistence type="evidence at protein level"/>
<gene>
    <name type="primary">GF14C</name>
    <name type="ordered locus">Os08g0430500</name>
    <name type="ordered locus">LOC_Os08g33370</name>
    <name type="ORF">OJ1124_B05.7</name>
</gene>
<organism>
    <name type="scientific">Oryza sativa subsp. japonica</name>
    <name type="common">Rice</name>
    <dbReference type="NCBI Taxonomy" id="39947"/>
    <lineage>
        <taxon>Eukaryota</taxon>
        <taxon>Viridiplantae</taxon>
        <taxon>Streptophyta</taxon>
        <taxon>Embryophyta</taxon>
        <taxon>Tracheophyta</taxon>
        <taxon>Spermatophyta</taxon>
        <taxon>Magnoliopsida</taxon>
        <taxon>Liliopsida</taxon>
        <taxon>Poales</taxon>
        <taxon>Poaceae</taxon>
        <taxon>BOP clade</taxon>
        <taxon>Oryzoideae</taxon>
        <taxon>Oryzeae</taxon>
        <taxon>Oryzinae</taxon>
        <taxon>Oryza</taxon>
        <taxon>Oryza sativa</taxon>
    </lineage>
</organism>
<protein>
    <recommendedName>
        <fullName>14-3-3-like protein GF14-C</fullName>
    </recommendedName>
    <alternativeName>
        <fullName>G-box factor 14-3-3 homolog C</fullName>
    </alternativeName>
</protein>
<feature type="chain" id="PRO_0000246065" description="14-3-3-like protein GF14-C">
    <location>
        <begin position="1"/>
        <end position="256"/>
    </location>
</feature>
<feature type="helix" evidence="4">
    <location>
        <begin position="3"/>
        <end position="15"/>
    </location>
</feature>
<feature type="helix" evidence="4">
    <location>
        <begin position="19"/>
        <end position="32"/>
    </location>
</feature>
<feature type="helix" evidence="4">
    <location>
        <begin position="40"/>
        <end position="74"/>
    </location>
</feature>
<feature type="helix" evidence="4">
    <location>
        <begin position="77"/>
        <end position="107"/>
    </location>
</feature>
<feature type="helix" evidence="4">
    <location>
        <begin position="109"/>
        <end position="112"/>
    </location>
</feature>
<feature type="helix" evidence="4">
    <location>
        <begin position="116"/>
        <end position="136"/>
    </location>
</feature>
<feature type="helix" evidence="4">
    <location>
        <begin position="139"/>
        <end position="163"/>
    </location>
</feature>
<feature type="helix" evidence="4">
    <location>
        <begin position="169"/>
        <end position="184"/>
    </location>
</feature>
<feature type="helix" evidence="4">
    <location>
        <begin position="189"/>
        <end position="204"/>
    </location>
</feature>
<feature type="helix" evidence="4">
    <location>
        <begin position="207"/>
        <end position="209"/>
    </location>
</feature>
<feature type="helix" evidence="4">
    <location>
        <begin position="212"/>
        <end position="231"/>
    </location>
</feature>
<evidence type="ECO:0000269" key="1">
    <source>
    </source>
</evidence>
<evidence type="ECO:0000269" key="2">
    <source>
    </source>
</evidence>
<evidence type="ECO:0000305" key="3"/>
<evidence type="ECO:0007829" key="4">
    <source>
        <dbReference type="PDB" id="3AXY"/>
    </source>
</evidence>
<accession>Q6ZKC0</accession>
<accession>O24222</accession>
<accession>Q8W1B7</accession>
<sequence>MSREENVYMAKLAEQAERYEEMVEYMEKVAKTVDVEELTVEERNLLSVAYKNVIGARRASWRIVSSIEQKEEGRGNEEHVTLIKEYRGKIEAELSKICDGILKLLDSHLVPSSTAAESKVFYLKMKGDYHRYLAEFKTGAERKEAAESTMVAYKAAQDIALADLAPTHPIRLGLALNFSVFYYEILNSPDKACNLAKQAFDEAISELDTLGEESYKDSTLIMQLLRDNLTLWTSDLTEDGGDEVKEASKGDACEGQ</sequence>